<organism>
    <name type="scientific">Pelobacter propionicus (strain DSM 2379 / NBRC 103807 / OttBd1)</name>
    <dbReference type="NCBI Taxonomy" id="338966"/>
    <lineage>
        <taxon>Bacteria</taxon>
        <taxon>Pseudomonadati</taxon>
        <taxon>Thermodesulfobacteriota</taxon>
        <taxon>Desulfuromonadia</taxon>
        <taxon>Desulfuromonadales</taxon>
        <taxon>Desulfuromonadaceae</taxon>
        <taxon>Pelobacter</taxon>
    </lineage>
</organism>
<keyword id="KW-1185">Reference proteome</keyword>
<keyword id="KW-0687">Ribonucleoprotein</keyword>
<keyword id="KW-0689">Ribosomal protein</keyword>
<keyword id="KW-0694">RNA-binding</keyword>
<keyword id="KW-0699">rRNA-binding</keyword>
<evidence type="ECO:0000255" key="1">
    <source>
        <dbReference type="HAMAP-Rule" id="MF_00362"/>
    </source>
</evidence>
<evidence type="ECO:0000305" key="2"/>
<sequence>MNRDNKQELVTQMHERLSRAKAVFLADFRGMAVGQATSLRNELRGASVEYKVFKNTLLDLAAKGTDVECISPYLAGPTAIAISYDDPVSAAKVLSKFAKDPAGKFVLKAGVLSGKLLDVTQIQALADLPSREVLIAKMLGSMQAPATNFVGVLAALPGSLVRVLDAIRAQKADN</sequence>
<accession>A1ALT2</accession>
<protein>
    <recommendedName>
        <fullName evidence="1">Large ribosomal subunit protein uL10</fullName>
    </recommendedName>
    <alternativeName>
        <fullName evidence="2">50S ribosomal protein L10</fullName>
    </alternativeName>
</protein>
<proteinExistence type="inferred from homology"/>
<feature type="chain" id="PRO_1000005552" description="Large ribosomal subunit protein uL10">
    <location>
        <begin position="1"/>
        <end position="174"/>
    </location>
</feature>
<comment type="function">
    <text evidence="1">Forms part of the ribosomal stalk, playing a central role in the interaction of the ribosome with GTP-bound translation factors.</text>
</comment>
<comment type="subunit">
    <text evidence="1">Part of the ribosomal stalk of the 50S ribosomal subunit. The N-terminus interacts with L11 and the large rRNA to form the base of the stalk. The C-terminus forms an elongated spine to which L12 dimers bind in a sequential fashion forming a multimeric L10(L12)X complex.</text>
</comment>
<comment type="similarity">
    <text evidence="1">Belongs to the universal ribosomal protein uL10 family.</text>
</comment>
<reference key="1">
    <citation type="submission" date="2006-10" db="EMBL/GenBank/DDBJ databases">
        <title>Complete sequence of chromosome of Pelobacter propionicus DSM 2379.</title>
        <authorList>
            <consortium name="US DOE Joint Genome Institute"/>
            <person name="Copeland A."/>
            <person name="Lucas S."/>
            <person name="Lapidus A."/>
            <person name="Barry K."/>
            <person name="Detter J.C."/>
            <person name="Glavina del Rio T."/>
            <person name="Hammon N."/>
            <person name="Israni S."/>
            <person name="Dalin E."/>
            <person name="Tice H."/>
            <person name="Pitluck S."/>
            <person name="Saunders E."/>
            <person name="Brettin T."/>
            <person name="Bruce D."/>
            <person name="Han C."/>
            <person name="Tapia R."/>
            <person name="Schmutz J."/>
            <person name="Larimer F."/>
            <person name="Land M."/>
            <person name="Hauser L."/>
            <person name="Kyrpides N."/>
            <person name="Kim E."/>
            <person name="Lovley D."/>
            <person name="Richardson P."/>
        </authorList>
    </citation>
    <scope>NUCLEOTIDE SEQUENCE [LARGE SCALE GENOMIC DNA]</scope>
    <source>
        <strain>DSM 2379 / NBRC 103807 / OttBd1</strain>
    </source>
</reference>
<gene>
    <name evidence="1" type="primary">rplJ</name>
    <name type="ordered locus">Ppro_0671</name>
</gene>
<name>RL10_PELPD</name>
<dbReference type="EMBL" id="CP000482">
    <property type="protein sequence ID" value="ABK98302.1"/>
    <property type="molecule type" value="Genomic_DNA"/>
</dbReference>
<dbReference type="RefSeq" id="WP_011734615.1">
    <property type="nucleotide sequence ID" value="NC_008609.1"/>
</dbReference>
<dbReference type="SMR" id="A1ALT2"/>
<dbReference type="STRING" id="338966.Ppro_0671"/>
<dbReference type="KEGG" id="ppd:Ppro_0671"/>
<dbReference type="eggNOG" id="COG0244">
    <property type="taxonomic scope" value="Bacteria"/>
</dbReference>
<dbReference type="HOGENOM" id="CLU_092227_0_0_7"/>
<dbReference type="OrthoDB" id="3186107at2"/>
<dbReference type="Proteomes" id="UP000006732">
    <property type="component" value="Chromosome"/>
</dbReference>
<dbReference type="GO" id="GO:1990904">
    <property type="term" value="C:ribonucleoprotein complex"/>
    <property type="evidence" value="ECO:0007669"/>
    <property type="project" value="UniProtKB-KW"/>
</dbReference>
<dbReference type="GO" id="GO:0005840">
    <property type="term" value="C:ribosome"/>
    <property type="evidence" value="ECO:0007669"/>
    <property type="project" value="UniProtKB-KW"/>
</dbReference>
<dbReference type="GO" id="GO:0070180">
    <property type="term" value="F:large ribosomal subunit rRNA binding"/>
    <property type="evidence" value="ECO:0007669"/>
    <property type="project" value="UniProtKB-UniRule"/>
</dbReference>
<dbReference type="GO" id="GO:0006412">
    <property type="term" value="P:translation"/>
    <property type="evidence" value="ECO:0007669"/>
    <property type="project" value="UniProtKB-UniRule"/>
</dbReference>
<dbReference type="CDD" id="cd05797">
    <property type="entry name" value="Ribosomal_L10"/>
    <property type="match status" value="1"/>
</dbReference>
<dbReference type="Gene3D" id="3.30.70.1730">
    <property type="match status" value="1"/>
</dbReference>
<dbReference type="Gene3D" id="6.10.250.290">
    <property type="match status" value="1"/>
</dbReference>
<dbReference type="HAMAP" id="MF_00362">
    <property type="entry name" value="Ribosomal_uL10"/>
    <property type="match status" value="1"/>
</dbReference>
<dbReference type="InterPro" id="IPR001790">
    <property type="entry name" value="Ribosomal_uL10"/>
</dbReference>
<dbReference type="InterPro" id="IPR043141">
    <property type="entry name" value="Ribosomal_uL10-like_sf"/>
</dbReference>
<dbReference type="InterPro" id="IPR022973">
    <property type="entry name" value="Ribosomal_uL10_bac"/>
</dbReference>
<dbReference type="InterPro" id="IPR047865">
    <property type="entry name" value="Ribosomal_uL10_bac_type"/>
</dbReference>
<dbReference type="NCBIfam" id="NF000955">
    <property type="entry name" value="PRK00099.1-1"/>
    <property type="match status" value="1"/>
</dbReference>
<dbReference type="PANTHER" id="PTHR11560">
    <property type="entry name" value="39S RIBOSOMAL PROTEIN L10, MITOCHONDRIAL"/>
    <property type="match status" value="1"/>
</dbReference>
<dbReference type="Pfam" id="PF00466">
    <property type="entry name" value="Ribosomal_L10"/>
    <property type="match status" value="1"/>
</dbReference>
<dbReference type="SUPFAM" id="SSF160369">
    <property type="entry name" value="Ribosomal protein L10-like"/>
    <property type="match status" value="1"/>
</dbReference>